<comment type="function">
    <text evidence="1">Hydrolyzes cAMP to 5'-AMP and cGMP to 5'-GMP. Does not show phosphohydrolase activity toward various phosphatidylcholine and phosphorylated sugars.</text>
</comment>
<comment type="catalytic activity">
    <reaction evidence="1">
        <text>a nucleoside 3',5'-cyclic phosphate + H2O = a nucleoside 5'-phosphate + H(+)</text>
        <dbReference type="Rhea" id="RHEA:14653"/>
        <dbReference type="ChEBI" id="CHEBI:15377"/>
        <dbReference type="ChEBI" id="CHEBI:15378"/>
        <dbReference type="ChEBI" id="CHEBI:57867"/>
        <dbReference type="ChEBI" id="CHEBI:58464"/>
        <dbReference type="EC" id="3.1.4.17"/>
    </reaction>
</comment>
<comment type="cofactor">
    <cofactor evidence="1">
        <name>Mn(2+)</name>
        <dbReference type="ChEBI" id="CHEBI:29035"/>
    </cofactor>
</comment>
<comment type="biophysicochemical properties">
    <kinetics>
        <KM evidence="1">0.88 mM for cAMP</KM>
        <KM evidence="1">0.82 mM for cGMP</KM>
        <KM evidence="1">0.53 mM for bis-p-nitrophenylphosphate</KM>
        <text>kcat is 2008 min(-1) and 957 min(-1) with cAMP and cGMP as substrate, respectively.</text>
    </kinetics>
    <phDependence>
        <text evidence="1">Optimum pH is 4.0-4.5.</text>
    </phDependence>
    <temperatureDependence>
        <text evidence="1">Optimum temperature is 30-40 degrees Celsius.</text>
    </temperatureDependence>
</comment>
<gene>
    <name type="ordered locus">HP_1042</name>
</gene>
<feature type="chain" id="PRO_0000424564" description="3',5'-cyclic-nucleotide phosphodiesterase">
    <location>
        <begin position="1"/>
        <end position="348"/>
    </location>
</feature>
<accession>O25683</accession>
<dbReference type="EC" id="3.1.4.17"/>
<dbReference type="EMBL" id="AE000511">
    <property type="protein sequence ID" value="AAD08096.1"/>
    <property type="molecule type" value="Genomic_DNA"/>
</dbReference>
<dbReference type="PIR" id="B64650">
    <property type="entry name" value="B64650"/>
</dbReference>
<dbReference type="RefSeq" id="NP_207832.1">
    <property type="nucleotide sequence ID" value="NC_000915.1"/>
</dbReference>
<dbReference type="SMR" id="O25683"/>
<dbReference type="STRING" id="85962.HP_1042"/>
<dbReference type="PaxDb" id="85962-C694_05390"/>
<dbReference type="EnsemblBacteria" id="AAD08096">
    <property type="protein sequence ID" value="AAD08096"/>
    <property type="gene ID" value="HP_1042"/>
</dbReference>
<dbReference type="KEGG" id="hpy:HP_1042"/>
<dbReference type="PATRIC" id="fig|85962.8.peg.1091"/>
<dbReference type="eggNOG" id="COG2404">
    <property type="taxonomic scope" value="Bacteria"/>
</dbReference>
<dbReference type="InParanoid" id="O25683"/>
<dbReference type="OrthoDB" id="5800592at2"/>
<dbReference type="SABIO-RK" id="O25683"/>
<dbReference type="Proteomes" id="UP000000429">
    <property type="component" value="Chromosome"/>
</dbReference>
<dbReference type="GO" id="GO:0004114">
    <property type="term" value="F:3',5'-cyclic-nucleotide phosphodiesterase activity"/>
    <property type="evidence" value="ECO:0007669"/>
    <property type="project" value="UniProtKB-EC"/>
</dbReference>
<dbReference type="GO" id="GO:0000166">
    <property type="term" value="F:nucleotide binding"/>
    <property type="evidence" value="ECO:0007669"/>
    <property type="project" value="UniProtKB-KW"/>
</dbReference>
<dbReference type="Gene3D" id="3.10.310.30">
    <property type="match status" value="1"/>
</dbReference>
<dbReference type="InterPro" id="IPR038763">
    <property type="entry name" value="DHH_sf"/>
</dbReference>
<dbReference type="InterPro" id="IPR052968">
    <property type="entry name" value="Nucleotide_metab_enz"/>
</dbReference>
<dbReference type="PANTHER" id="PTHR42146">
    <property type="entry name" value="3',5'-CYCLIC-NUCLEOTIDE PHOSPHODIESTERASE"/>
    <property type="match status" value="1"/>
</dbReference>
<dbReference type="PANTHER" id="PTHR42146:SF1">
    <property type="entry name" value="OLIGORIBONUCLEASE NRNB"/>
    <property type="match status" value="1"/>
</dbReference>
<dbReference type="SUPFAM" id="SSF64182">
    <property type="entry name" value="DHH phosphoesterases"/>
    <property type="match status" value="1"/>
</dbReference>
<organism>
    <name type="scientific">Helicobacter pylori (strain ATCC 700392 / 26695)</name>
    <name type="common">Campylobacter pylori</name>
    <dbReference type="NCBI Taxonomy" id="85962"/>
    <lineage>
        <taxon>Bacteria</taxon>
        <taxon>Pseudomonadati</taxon>
        <taxon>Campylobacterota</taxon>
        <taxon>Epsilonproteobacteria</taxon>
        <taxon>Campylobacterales</taxon>
        <taxon>Helicobacteraceae</taxon>
        <taxon>Helicobacter</taxon>
    </lineage>
</organism>
<protein>
    <recommendedName>
        <fullName>3',5'-cyclic-nucleotide phosphodiesterase</fullName>
        <ecNumber>3.1.4.17</ecNumber>
    </recommendedName>
    <alternativeName>
        <fullName>cAMP/cGMP phosphodiesterase</fullName>
    </alternativeName>
</protein>
<sequence>MMQVYHLSHIDLDGYACQLVSKQFFKNIQCYNANYGREVSARIYEILNAIAQSKESEFLILVSDLNLNLNEAEYLQDKIQEHRLQNKNIQIQLLDHHISGKEVAESFHWYFLDINRCATKIVYEFLKKHYAILEPKNTTWLEPLVEMVNSVDIWDTQGYGFELGKVCMRMINQSSELNRFMFDDENRNYKLKLLEEVKNYLFLENAPVAYDNDLFKLKKIALGGDPDAETMDNISSNAQTHLLSLKKHDCSVYYQDKKGFLSYSMGGISVLANLFLTQNPDFDFYMDVNAKGNVSLRANGNCDVCELSQMCFNGGGHRNASGGKIDGFRESFNYRDIKEQIEEIFNNA</sequence>
<name>CNPDE_HELPY</name>
<reference key="1">
    <citation type="journal article" date="1997" name="Nature">
        <title>The complete genome sequence of the gastric pathogen Helicobacter pylori.</title>
        <authorList>
            <person name="Tomb J.-F."/>
            <person name="White O."/>
            <person name="Kerlavage A.R."/>
            <person name="Clayton R.A."/>
            <person name="Sutton G.G."/>
            <person name="Fleischmann R.D."/>
            <person name="Ketchum K.A."/>
            <person name="Klenk H.-P."/>
            <person name="Gill S.R."/>
            <person name="Dougherty B.A."/>
            <person name="Nelson K.E."/>
            <person name="Quackenbush J."/>
            <person name="Zhou L."/>
            <person name="Kirkness E.F."/>
            <person name="Peterson S.N."/>
            <person name="Loftus B.J."/>
            <person name="Richardson D.L."/>
            <person name="Dodson R.J."/>
            <person name="Khalak H.G."/>
            <person name="Glodek A."/>
            <person name="McKenney K."/>
            <person name="FitzGerald L.M."/>
            <person name="Lee N."/>
            <person name="Adams M.D."/>
            <person name="Hickey E.K."/>
            <person name="Berg D.E."/>
            <person name="Gocayne J.D."/>
            <person name="Utterback T.R."/>
            <person name="Peterson J.D."/>
            <person name="Kelley J.M."/>
            <person name="Cotton M.D."/>
            <person name="Weidman J.F."/>
            <person name="Fujii C."/>
            <person name="Bowman C."/>
            <person name="Watthey L."/>
            <person name="Wallin E."/>
            <person name="Hayes W.S."/>
            <person name="Borodovsky M."/>
            <person name="Karp P.D."/>
            <person name="Smith H.O."/>
            <person name="Fraser C.M."/>
            <person name="Venter J.C."/>
        </authorList>
    </citation>
    <scope>NUCLEOTIDE SEQUENCE [LARGE SCALE GENOMIC DNA]</scope>
    <source>
        <strain>ATCC 700392 / 26695</strain>
    </source>
</reference>
<reference key="2">
    <citation type="journal article" date="2013" name="PLoS ONE">
        <title>Biochemical characterization of hypothetical proteins from Helicobacter pylori.</title>
        <authorList>
            <person name="Choi H.P."/>
            <person name="Juarez S."/>
            <person name="Ciordia S."/>
            <person name="Fernandez M."/>
            <person name="Bargiela R."/>
            <person name="Albar J.P."/>
            <person name="Mazumdar V."/>
            <person name="Anton B.P."/>
            <person name="Kasif S."/>
            <person name="Ferrer M."/>
            <person name="Steffen M."/>
        </authorList>
    </citation>
    <scope>IDENTIFICATION BY MASS SPECTROMETRY</scope>
    <scope>FUNCTION</scope>
    <scope>CATALYTIC ACTIVITY</scope>
    <scope>COFACTOR</scope>
    <scope>SUBSTRATE SPECIFICITY</scope>
    <scope>BIOPHYSICOCHEMICAL PROPERTIES</scope>
    <source>
        <strain>ATCC 700392 / 26695</strain>
    </source>
</reference>
<keyword id="KW-0114">cAMP</keyword>
<keyword id="KW-0140">cGMP</keyword>
<keyword id="KW-0378">Hydrolase</keyword>
<keyword id="KW-0464">Manganese</keyword>
<keyword id="KW-0547">Nucleotide-binding</keyword>
<keyword id="KW-1185">Reference proteome</keyword>
<proteinExistence type="evidence at protein level"/>
<evidence type="ECO:0000269" key="1">
    <source>
    </source>
</evidence>